<organism>
    <name type="scientific">Encephalitozoon cuniculi (strain GB-M1)</name>
    <name type="common">Microsporidian parasite</name>
    <dbReference type="NCBI Taxonomy" id="284813"/>
    <lineage>
        <taxon>Eukaryota</taxon>
        <taxon>Fungi</taxon>
        <taxon>Fungi incertae sedis</taxon>
        <taxon>Microsporidia</taxon>
        <taxon>Unikaryonidae</taxon>
        <taxon>Encephalitozoon</taxon>
    </lineage>
</organism>
<gene>
    <name type="ordered locus">ECU04_0900</name>
</gene>
<evidence type="ECO:0000250" key="1"/>
<evidence type="ECO:0000250" key="2">
    <source>
        <dbReference type="UniProtKB" id="A5K464"/>
    </source>
</evidence>
<evidence type="ECO:0000255" key="3">
    <source>
        <dbReference type="PROSITE-ProRule" id="PRU00816"/>
    </source>
</evidence>
<evidence type="ECO:0000305" key="4"/>
<sequence length="557" mass="62618">MPTLVAEKKRIQDLLGMDLGDRRFEKILFDFGLELDDVVEEEGKTMYRIEIPANRYDLLCAEGLCYALRAFLSMETYEDIDVEEGEVVVYKTGGEERPCIACAVIKGVDLLSEGAYKSFIDYQDKLHLTIGRNRALVSMGTHDLDKIKGPVFYKSETPERIGFKPLNAEREVNGKELGSRFPPGSKIGRYMRLIEKNEKYPLFEDSMGTIMSLPPIINSDATKISPGTKNVFVEMTGTDFHRVNTALKLLLGCFRGRKIESVEIRNGNERTRTPVMHNRSYVMGLGEINRSLGLDLSLSAAKSYMERMMHSVDTIDESTLRVRVHDIRSDVLHKCDLIEDIAIAHGFNNFRRELPSFFTAGSEIPLNKFSDKLRTELSIMGFDEALTLTLLSREENVIDGDQAVVLMNPKSASYEVCRTSLIPGLMKTVASNLHMKIPFRLFEVSDVVLLDKENECGASNSRRLAAMYCGHTPCLEEVQGSLSLLLKKCGVRHSYSTHNDSARYLKNQSALVIVEDAAIGSIGVCNPEICKTFRVPYAASFFEIDVEKLLSIYMART</sequence>
<feature type="chain" id="PRO_0000388410" description="Probable phenylalanine--tRNA ligase beta subunit">
    <location>
        <begin position="1"/>
        <end position="557"/>
    </location>
</feature>
<feature type="domain" description="B5" evidence="3">
    <location>
        <begin position="276"/>
        <end position="352"/>
    </location>
</feature>
<feature type="binding site" evidence="3">
    <location>
        <position position="330"/>
    </location>
    <ligand>
        <name>Mg(2+)</name>
        <dbReference type="ChEBI" id="CHEBI:18420"/>
        <note>shared with alpha subunit</note>
    </ligand>
</feature>
<feature type="binding site" evidence="3">
    <location>
        <position position="336"/>
    </location>
    <ligand>
        <name>Mg(2+)</name>
        <dbReference type="ChEBI" id="CHEBI:18420"/>
        <note>shared with alpha subunit</note>
    </ligand>
</feature>
<feature type="binding site" evidence="3">
    <location>
        <position position="339"/>
    </location>
    <ligand>
        <name>Mg(2+)</name>
        <dbReference type="ChEBI" id="CHEBI:18420"/>
        <note>shared with alpha subunit</note>
    </ligand>
</feature>
<feature type="binding site" evidence="3">
    <location>
        <position position="340"/>
    </location>
    <ligand>
        <name>Mg(2+)</name>
        <dbReference type="ChEBI" id="CHEBI:18420"/>
        <note>shared with alpha subunit</note>
    </ligand>
</feature>
<keyword id="KW-0030">Aminoacyl-tRNA synthetase</keyword>
<keyword id="KW-0067">ATP-binding</keyword>
<keyword id="KW-0963">Cytoplasm</keyword>
<keyword id="KW-0436">Ligase</keyword>
<keyword id="KW-0460">Magnesium</keyword>
<keyword id="KW-0479">Metal-binding</keyword>
<keyword id="KW-0547">Nucleotide-binding</keyword>
<keyword id="KW-0648">Protein biosynthesis</keyword>
<keyword id="KW-1185">Reference proteome</keyword>
<proteinExistence type="inferred from homology"/>
<reference key="1">
    <citation type="journal article" date="2001" name="Nature">
        <title>Genome sequence and gene compaction of the eukaryote parasite Encephalitozoon cuniculi.</title>
        <authorList>
            <person name="Katinka M.D."/>
            <person name="Duprat S."/>
            <person name="Cornillot E."/>
            <person name="Metenier G."/>
            <person name="Thomarat F."/>
            <person name="Prensier G."/>
            <person name="Barbe V."/>
            <person name="Peyretaillade E."/>
            <person name="Brottier P."/>
            <person name="Wincker P."/>
            <person name="Delbac F."/>
            <person name="El Alaoui H."/>
            <person name="Peyret P."/>
            <person name="Saurin W."/>
            <person name="Gouy M."/>
            <person name="Weissenbach J."/>
            <person name="Vivares C.P."/>
        </authorList>
    </citation>
    <scope>NUCLEOTIDE SEQUENCE [LARGE SCALE GENOMIC DNA]</scope>
    <source>
        <strain>GB-M1</strain>
    </source>
</reference>
<comment type="catalytic activity">
    <reaction>
        <text>tRNA(Phe) + L-phenylalanine + ATP = L-phenylalanyl-tRNA(Phe) + AMP + diphosphate + H(+)</text>
        <dbReference type="Rhea" id="RHEA:19413"/>
        <dbReference type="Rhea" id="RHEA-COMP:9668"/>
        <dbReference type="Rhea" id="RHEA-COMP:9699"/>
        <dbReference type="ChEBI" id="CHEBI:15378"/>
        <dbReference type="ChEBI" id="CHEBI:30616"/>
        <dbReference type="ChEBI" id="CHEBI:33019"/>
        <dbReference type="ChEBI" id="CHEBI:58095"/>
        <dbReference type="ChEBI" id="CHEBI:78442"/>
        <dbReference type="ChEBI" id="CHEBI:78531"/>
        <dbReference type="ChEBI" id="CHEBI:456215"/>
        <dbReference type="EC" id="6.1.1.20"/>
    </reaction>
</comment>
<comment type="cofactor">
    <cofactor evidence="2">
        <name>Mg(2+)</name>
        <dbReference type="ChEBI" id="CHEBI:18420"/>
    </cofactor>
</comment>
<comment type="subunit">
    <text evidence="1">Tetramer of two alpha and two beta subunits.</text>
</comment>
<comment type="subcellular location">
    <subcellularLocation>
        <location evidence="1">Cytoplasm</location>
    </subcellularLocation>
</comment>
<comment type="similarity">
    <text evidence="4">Belongs to the phenylalanyl-tRNA synthetase beta subunit family. Type 2 subfamily.</text>
</comment>
<dbReference type="EC" id="6.1.1.20"/>
<dbReference type="EMBL" id="AL590444">
    <property type="protein sequence ID" value="CAD25277.1"/>
    <property type="molecule type" value="Genomic_DNA"/>
</dbReference>
<dbReference type="RefSeq" id="NP_584773.1">
    <property type="nucleotide sequence ID" value="NM_001041123.1"/>
</dbReference>
<dbReference type="SMR" id="Q8SS40"/>
<dbReference type="FunCoup" id="Q8SS40">
    <property type="interactions" value="284"/>
</dbReference>
<dbReference type="STRING" id="284813.Q8SS40"/>
<dbReference type="GeneID" id="858921"/>
<dbReference type="KEGG" id="ecu:ECU04_0900"/>
<dbReference type="VEuPathDB" id="MicrosporidiaDB:ECU04_0900"/>
<dbReference type="HOGENOM" id="CLU_020279_2_0_1"/>
<dbReference type="InParanoid" id="Q8SS40"/>
<dbReference type="OMA" id="FPGRCAN"/>
<dbReference type="OrthoDB" id="1698572at2759"/>
<dbReference type="Proteomes" id="UP000000819">
    <property type="component" value="Chromosome IV"/>
</dbReference>
<dbReference type="GO" id="GO:0009328">
    <property type="term" value="C:phenylalanine-tRNA ligase complex"/>
    <property type="evidence" value="ECO:0007669"/>
    <property type="project" value="TreeGrafter"/>
</dbReference>
<dbReference type="GO" id="GO:0005524">
    <property type="term" value="F:ATP binding"/>
    <property type="evidence" value="ECO:0007669"/>
    <property type="project" value="UniProtKB-KW"/>
</dbReference>
<dbReference type="GO" id="GO:0000287">
    <property type="term" value="F:magnesium ion binding"/>
    <property type="evidence" value="ECO:0000250"/>
    <property type="project" value="UniProtKB"/>
</dbReference>
<dbReference type="GO" id="GO:0004826">
    <property type="term" value="F:phenylalanine-tRNA ligase activity"/>
    <property type="evidence" value="ECO:0007669"/>
    <property type="project" value="UniProtKB-EC"/>
</dbReference>
<dbReference type="GO" id="GO:0003723">
    <property type="term" value="F:RNA binding"/>
    <property type="evidence" value="ECO:0007669"/>
    <property type="project" value="InterPro"/>
</dbReference>
<dbReference type="GO" id="GO:0006432">
    <property type="term" value="P:phenylalanyl-tRNA aminoacylation"/>
    <property type="evidence" value="ECO:0007669"/>
    <property type="project" value="InterPro"/>
</dbReference>
<dbReference type="CDD" id="cd00769">
    <property type="entry name" value="PheRS_beta_core"/>
    <property type="match status" value="1"/>
</dbReference>
<dbReference type="FunFam" id="3.50.40.10:FF:000002">
    <property type="entry name" value="phenylalanine--tRNA ligase beta subunit"/>
    <property type="match status" value="1"/>
</dbReference>
<dbReference type="Gene3D" id="3.30.56.10">
    <property type="match status" value="2"/>
</dbReference>
<dbReference type="Gene3D" id="3.30.930.10">
    <property type="entry name" value="Bira Bifunctional Protein, Domain 2"/>
    <property type="match status" value="1"/>
</dbReference>
<dbReference type="Gene3D" id="3.50.40.10">
    <property type="entry name" value="Phenylalanyl-trna Synthetase, Chain B, domain 3"/>
    <property type="match status" value="1"/>
</dbReference>
<dbReference type="InterPro" id="IPR045864">
    <property type="entry name" value="aa-tRNA-synth_II/BPL/LPL"/>
</dbReference>
<dbReference type="InterPro" id="IPR005146">
    <property type="entry name" value="B3/B4_tRNA-bd"/>
</dbReference>
<dbReference type="InterPro" id="IPR009061">
    <property type="entry name" value="DNA-bd_dom_put_sf"/>
</dbReference>
<dbReference type="InterPro" id="IPR045060">
    <property type="entry name" value="Phe-tRNA-ligase_IIc_bsu"/>
</dbReference>
<dbReference type="InterPro" id="IPR004531">
    <property type="entry name" value="Phe-tRNA-synth_IIc_bsu_arc_euk"/>
</dbReference>
<dbReference type="InterPro" id="IPR020825">
    <property type="entry name" value="Phe-tRNA_synthase-like_B3/B4"/>
</dbReference>
<dbReference type="InterPro" id="IPR041616">
    <property type="entry name" value="PheRS_beta_core"/>
</dbReference>
<dbReference type="InterPro" id="IPR040659">
    <property type="entry name" value="PhetRS_B1"/>
</dbReference>
<dbReference type="InterPro" id="IPR005147">
    <property type="entry name" value="tRNA_synthase_B5-dom"/>
</dbReference>
<dbReference type="NCBIfam" id="TIGR00471">
    <property type="entry name" value="pheT_arch"/>
    <property type="match status" value="1"/>
</dbReference>
<dbReference type="PANTHER" id="PTHR10947:SF0">
    <property type="entry name" value="PHENYLALANINE--TRNA LIGASE BETA SUBUNIT"/>
    <property type="match status" value="1"/>
</dbReference>
<dbReference type="PANTHER" id="PTHR10947">
    <property type="entry name" value="PHENYLALANYL-TRNA SYNTHETASE BETA CHAIN AND LEUCINE-RICH REPEAT-CONTAINING PROTEIN 47"/>
    <property type="match status" value="1"/>
</dbReference>
<dbReference type="Pfam" id="PF03483">
    <property type="entry name" value="B3_4"/>
    <property type="match status" value="1"/>
</dbReference>
<dbReference type="Pfam" id="PF03484">
    <property type="entry name" value="B5"/>
    <property type="match status" value="1"/>
</dbReference>
<dbReference type="Pfam" id="PF18262">
    <property type="entry name" value="PhetRS_B1"/>
    <property type="match status" value="1"/>
</dbReference>
<dbReference type="Pfam" id="PF17759">
    <property type="entry name" value="tRNA_synthFbeta"/>
    <property type="match status" value="1"/>
</dbReference>
<dbReference type="SMART" id="SM00873">
    <property type="entry name" value="B3_4"/>
    <property type="match status" value="1"/>
</dbReference>
<dbReference type="SMART" id="SM00874">
    <property type="entry name" value="B5"/>
    <property type="match status" value="1"/>
</dbReference>
<dbReference type="SUPFAM" id="SSF55681">
    <property type="entry name" value="Class II aaRS and biotin synthetases"/>
    <property type="match status" value="1"/>
</dbReference>
<dbReference type="SUPFAM" id="SSF46955">
    <property type="entry name" value="Putative DNA-binding domain"/>
    <property type="match status" value="2"/>
</dbReference>
<dbReference type="PROSITE" id="PS51483">
    <property type="entry name" value="B5"/>
    <property type="match status" value="1"/>
</dbReference>
<name>SYFB_ENCCU</name>
<protein>
    <recommendedName>
        <fullName>Probable phenylalanine--tRNA ligase beta subunit</fullName>
        <ecNumber>6.1.1.20</ecNumber>
    </recommendedName>
    <alternativeName>
        <fullName>Phenylalanyl-tRNA synthetase beta subunit</fullName>
        <shortName>PheRS</shortName>
    </alternativeName>
</protein>
<accession>Q8SS40</accession>